<protein>
    <recommendedName>
        <fullName>Nuclear shuttle protein</fullName>
        <shortName>NSP</shortName>
    </recommendedName>
    <alternativeName>
        <fullName>Protein BR1</fullName>
    </alternativeName>
    <alternativeName>
        <fullName>Protein BV1</fullName>
    </alternativeName>
</protein>
<proteinExistence type="evidence at protein level"/>
<gene>
    <name type="ORF">BR1</name>
    <name type="ORF">BV1</name>
</gene>
<feature type="chain" id="PRO_0000222267" description="Nuclear shuttle protein">
    <location>
        <begin position="1"/>
        <end position="256"/>
    </location>
</feature>
<feature type="region of interest" description="Disordered" evidence="3">
    <location>
        <begin position="1"/>
        <end position="46"/>
    </location>
</feature>
<feature type="region of interest" description="Interaction with Arabidopsis thaliana NSI protein" evidence="1">
    <location>
        <begin position="150"/>
        <end position="187"/>
    </location>
</feature>
<feature type="short sequence motif" description="Bipartite nuclear localization signal">
    <location>
        <begin position="21"/>
        <end position="42"/>
    </location>
</feature>
<feature type="short sequence motif" description="Nuclear localization signal" evidence="6">
    <location>
        <begin position="81"/>
        <end position="96"/>
    </location>
</feature>
<feature type="short sequence motif" description="Nuclear export signal" evidence="2">
    <location>
        <begin position="177"/>
        <end position="198"/>
    </location>
</feature>
<feature type="compositionally biased region" description="Polar residues" evidence="3">
    <location>
        <begin position="1"/>
        <end position="16"/>
    </location>
</feature>
<feature type="mutagenesis site" description="Delayed nuclear targeting. No effect on infectivity." evidence="6">
    <original>KR</original>
    <variation>AA</variation>
    <location>
        <begin position="25"/>
        <end position="26"/>
    </location>
</feature>
<feature type="mutagenesis site" description="No effect on subcellular location." evidence="6">
    <original>RRR</original>
    <variation>AAA</variation>
    <location>
        <begin position="36"/>
        <end position="38"/>
    </location>
</feature>
<feature type="mutagenesis site" description="Mislocalizes to the cytoplasm. Complete loss of infectivity." evidence="6">
    <original>RTR</original>
    <variation>ATA</variation>
    <location>
        <begin position="89"/>
        <end position="91"/>
    </location>
</feature>
<feature type="mutagenesis site" description="No effect on subcellular location." evidence="6">
    <original>KRVR</original>
    <variation>AAVA</variation>
    <location>
        <begin position="97"/>
        <end position="100"/>
    </location>
</feature>
<feature type="mutagenesis site" description="No effect on subcellular location." evidence="6">
    <original>FD</original>
    <variation>AA</variation>
    <location>
        <begin position="148"/>
        <end position="149"/>
    </location>
</feature>
<feature type="mutagenesis site" description="No effect on subcellular location." evidence="6">
    <original>DR</original>
    <variation>AA</variation>
    <location>
        <begin position="170"/>
        <end position="171"/>
    </location>
</feature>
<feature type="mutagenesis site" description="Complete loss of infectivity." evidence="4">
    <original>LLIDL</original>
    <variation>AAIDA</variation>
    <location>
        <begin position="189"/>
        <end position="193"/>
    </location>
</feature>
<feature type="mutagenesis site" description="Delayed nuclear targeting. No effect on infectivity." evidence="6">
    <original>NKR</original>
    <variation>AAA</variation>
    <location>
        <begin position="201"/>
        <end position="203"/>
    </location>
</feature>
<feature type="mutagenesis site" description="Delayed nuclear targeting." evidence="6">
    <original>D</original>
    <variation>A</variation>
    <location>
        <position position="212"/>
    </location>
</feature>
<feature type="mutagenesis site" description="Delayed nuclear targeting." evidence="6">
    <original>RD</original>
    <variation>AA</variation>
    <location>
        <begin position="215"/>
        <end position="216"/>
    </location>
</feature>
<feature type="mutagenesis site" description="Mislocalizes to the cytoplasm. Complete loss of infectivity." evidence="6">
    <original>N</original>
    <variation>A</variation>
    <location>
        <position position="224"/>
    </location>
</feature>
<feature type="mutagenesis site" description="Mislocalizes to the cytoplasm. Complete loss of infectivity." evidence="6">
    <original>KN</original>
    <variation>AA</variation>
    <location>
        <begin position="227"/>
        <end position="228"/>
    </location>
</feature>
<organism>
    <name type="scientific">Squash leaf curl virus</name>
    <name type="common">SLCV</name>
    <dbReference type="NCBI Taxonomy" id="10829"/>
    <lineage>
        <taxon>Viruses</taxon>
        <taxon>Monodnaviria</taxon>
        <taxon>Shotokuvirae</taxon>
        <taxon>Cressdnaviricota</taxon>
        <taxon>Repensiviricetes</taxon>
        <taxon>Geplafuvirales</taxon>
        <taxon>Geminiviridae</taxon>
        <taxon>Begomovirus</taxon>
    </lineage>
</organism>
<accession>P21935</accession>
<sequence length="256" mass="29228">MYSTSNRRGRSQTQRGSHVRRTGVKRSYGAARGDDRRRPNVVSKTQVEPRMTIQRVQENQFGPEFVLSQNSALSTFVTYPSYVKTVPNRTRTYIKLKRVRFKGTLKIERGQGDTIMDGPSSNIEGVFSMVIVVDRKPHVSQSGRLHTFDELFGARIHCHGNLSVVPALKDRYYIRHVTKRVVSLEKDTLLIDLHGTTQLSNKRYNCWASFSDLERDSCNGVYGNITKNALLVYYCWLSDAQSKASTYVSFELDYLG</sequence>
<reference key="1">
    <citation type="journal article" date="1991" name="Virology">
        <title>Infectivity and complete nucleotide sequence of the cloned genomic components of a bipartite squash leaf curl geminivirus with a broad host range phenotype.</title>
        <authorList>
            <person name="Lazarowitz S.G."/>
            <person name="Lazdins I.B."/>
        </authorList>
    </citation>
    <scope>NUCLEOTIDE SEQUENCE [GENOMIC DNA]</scope>
</reference>
<reference key="2">
    <citation type="journal article" date="1995" name="Plant Cell">
        <title>Cooperation in viral movement: the geminivirus BL1 movement protein interacts with BR1 and redirects it from the nucleus to the eell periphery.</title>
        <authorList>
            <person name="Sanderfoot A.A."/>
            <person name="Lazarowitz S.G."/>
        </authorList>
    </citation>
    <scope>SUBCELLULAR LOCATION</scope>
</reference>
<reference key="3">
    <citation type="journal article" date="1996" name="Plant Physiol.">
        <title>A viral movement protein as a nuclear shuttle. The geminivirus BR1 movement protein contains domains essential for interaction with BL1 and nuclear localization.</title>
        <authorList>
            <person name="Sanderfoot A.A."/>
            <person name="Ingham D.J."/>
            <person name="Lazarowitz S.G."/>
        </authorList>
    </citation>
    <scope>FUNCTION</scope>
    <scope>NUCLEAR LOCALIZATION SIGNAL</scope>
    <scope>MUTAGENESIS OF 25-LYS-ARG-26; 36-ARG--ARG-38; 89-ARG--ARG-91; 97-LYS--ARG-100; 148-PHE-ASP-149; 170-ASP-ARG-171; 201-ASN--ARG-203; ASP-212; 215-ARG-ASP-216; ASN-224 AND 227-LYS-ASN-228</scope>
</reference>
<reference key="4">
    <citation type="journal article" date="1999" name="Plant Cell">
        <title>Nuclear export in plants. Use of geminivirus movement proteins for a cell-based export assay.</title>
        <authorList>
            <person name="Ward B.M."/>
            <person name="Lazarowitz S.G."/>
        </authorList>
    </citation>
    <scope>NUCLEAR EXPORT SIGNAL</scope>
    <scope>MUTAGENESIS OF 189-LEU--LEU-193</scope>
</reference>
<dbReference type="EMBL" id="M38182">
    <property type="protein sequence ID" value="AAC32408.1"/>
    <property type="status" value="ALT_INIT"/>
    <property type="molecule type" value="Genomic_DNA"/>
</dbReference>
<dbReference type="PIR" id="A36785">
    <property type="entry name" value="QQCVSV"/>
</dbReference>
<dbReference type="RefSeq" id="NP_047247.2">
    <property type="nucleotide sequence ID" value="NC_001937.1"/>
</dbReference>
<dbReference type="KEGG" id="vg:956398"/>
<dbReference type="OrthoDB" id="8326at10239"/>
<dbReference type="Proteomes" id="UP000009151">
    <property type="component" value="Genome"/>
</dbReference>
<dbReference type="GO" id="GO:0043657">
    <property type="term" value="C:host cell"/>
    <property type="evidence" value="ECO:0007669"/>
    <property type="project" value="InterPro"/>
</dbReference>
<dbReference type="GO" id="GO:0030430">
    <property type="term" value="C:host cell cytoplasm"/>
    <property type="evidence" value="ECO:0007669"/>
    <property type="project" value="UniProtKB-SubCell"/>
</dbReference>
<dbReference type="GO" id="GO:0042025">
    <property type="term" value="C:host cell nucleus"/>
    <property type="evidence" value="ECO:0007669"/>
    <property type="project" value="UniProtKB-SubCell"/>
</dbReference>
<dbReference type="GO" id="GO:0020002">
    <property type="term" value="C:host cell plasma membrane"/>
    <property type="evidence" value="ECO:0007669"/>
    <property type="project" value="UniProtKB-SubCell"/>
</dbReference>
<dbReference type="GO" id="GO:0016020">
    <property type="term" value="C:membrane"/>
    <property type="evidence" value="ECO:0007669"/>
    <property type="project" value="UniProtKB-KW"/>
</dbReference>
<dbReference type="GO" id="GO:0019028">
    <property type="term" value="C:viral capsid"/>
    <property type="evidence" value="ECO:0007669"/>
    <property type="project" value="InterPro"/>
</dbReference>
<dbReference type="GO" id="GO:0003697">
    <property type="term" value="F:single-stranded DNA binding"/>
    <property type="evidence" value="ECO:0007669"/>
    <property type="project" value="InterPro"/>
</dbReference>
<dbReference type="GO" id="GO:0005198">
    <property type="term" value="F:structural molecule activity"/>
    <property type="evidence" value="ECO:0007669"/>
    <property type="project" value="InterPro"/>
</dbReference>
<dbReference type="GO" id="GO:0051027">
    <property type="term" value="P:DNA transport"/>
    <property type="evidence" value="ECO:0007669"/>
    <property type="project" value="InterPro"/>
</dbReference>
<dbReference type="GO" id="GO:0046740">
    <property type="term" value="P:transport of virus in host, cell to cell"/>
    <property type="evidence" value="ECO:0007669"/>
    <property type="project" value="UniProtKB-KW"/>
</dbReference>
<dbReference type="InterPro" id="IPR001530">
    <property type="entry name" value="Gemini_BR1"/>
</dbReference>
<dbReference type="InterPro" id="IPR000263">
    <property type="entry name" value="GV_A/BR1_coat"/>
</dbReference>
<dbReference type="Pfam" id="PF00844">
    <property type="entry name" value="Gemini_coat"/>
    <property type="match status" value="1"/>
</dbReference>
<dbReference type="PRINTS" id="PR00223">
    <property type="entry name" value="GEMCOATARBR1"/>
</dbReference>
<dbReference type="PRINTS" id="PR00225">
    <property type="entry name" value="GEMCOATBR1"/>
</dbReference>
<name>NSP_SLCV</name>
<organismHost>
    <name type="scientific">Cucurbita moschata</name>
    <name type="common">Winter crookneck squash</name>
    <name type="synonym">Cucurbita pepo var. moschata</name>
    <dbReference type="NCBI Taxonomy" id="3662"/>
</organismHost>
<organismHost>
    <name type="scientific">Cucurbita pepo</name>
    <name type="common">Vegetable marrow</name>
    <name type="synonym">Summer squash</name>
    <dbReference type="NCBI Taxonomy" id="3663"/>
</organismHost>
<organismHost>
    <name type="scientific">Phaseolus vulgaris</name>
    <name type="common">Kidney bean</name>
    <name type="synonym">French bean</name>
    <dbReference type="NCBI Taxonomy" id="3885"/>
</organismHost>
<evidence type="ECO:0000250" key="1"/>
<evidence type="ECO:0000255" key="2"/>
<evidence type="ECO:0000256" key="3">
    <source>
        <dbReference type="SAM" id="MobiDB-lite"/>
    </source>
</evidence>
<evidence type="ECO:0000269" key="4">
    <source>
    </source>
</evidence>
<evidence type="ECO:0000269" key="5">
    <source>
    </source>
</evidence>
<evidence type="ECO:0000269" key="6">
    <source>
    </source>
</evidence>
<evidence type="ECO:0000305" key="7"/>
<comment type="function">
    <text evidence="6">Binds to the genomic viral ssDNA, shuttles it into and out of the cell nucleus. Begomoviruses use 2 proteins to transport their DNA from cell to cell. The nuclear shuttle protein (NSP) shuttles it between nucleus and cytoplasm and the movement protein (MP) probably transports the DNA-NSP complex to the cell periphery and facilitates movement across the cell wall.</text>
</comment>
<comment type="subunit">
    <text evidence="1">Binds to single-stranded and double-stranded viral DNA. Interacts with the host nuclear shuttle interacting (NSI) protein. This interaction may allow NSP to recruit NSI monomers to the viral genome and thus regulate nuclear export of viral genome by NSP (By similarity).</text>
</comment>
<comment type="subcellular location">
    <subcellularLocation>
        <location evidence="5">Host nucleus</location>
    </subcellularLocation>
    <subcellularLocation>
        <location evidence="5">Host cytoplasm</location>
    </subcellularLocation>
    <subcellularLocation>
        <location evidence="5">Host cell membrane</location>
        <topology evidence="5">Peripheral membrane protein</topology>
        <orientation evidence="5">Cytoplasmic side</orientation>
    </subcellularLocation>
    <text>Translocated to the plasma membrane by the movement protein BC1.</text>
</comment>
<comment type="similarity">
    <text evidence="7">Belongs to the begomovirus nuclear shuttle protein family.</text>
</comment>
<comment type="sequence caution" evidence="7">
    <conflict type="erroneous initiation">
        <sequence resource="EMBL-CDS" id="AAC32408"/>
    </conflict>
    <text>Extended N-terminus.</text>
</comment>
<keyword id="KW-0238">DNA-binding</keyword>
<keyword id="KW-1032">Host cell membrane</keyword>
<keyword id="KW-1035">Host cytoplasm</keyword>
<keyword id="KW-1043">Host membrane</keyword>
<keyword id="KW-1048">Host nucleus</keyword>
<keyword id="KW-0945">Host-virus interaction</keyword>
<keyword id="KW-0472">Membrane</keyword>
<keyword id="KW-1185">Reference proteome</keyword>
<keyword id="KW-0813">Transport</keyword>
<keyword id="KW-0916">Viral movement protein</keyword>